<protein>
    <recommendedName>
        <fullName>Splicing factor 3B subunit 2</fullName>
    </recommendedName>
</protein>
<sequence length="878" mass="98198">MAAEHPEPPKGELQLPPPPPPGHYGAWAAQELQARLAEIGAPIQGSREELVERLQTYTRQTGIVLNRPVLRGEDGDKAAPPPMSAQLSGIPMPPPPMGLPPLQPPPPPPPPPPGLGLGFPMAHPPNLGPPPPLRVGEPVALSEEERLKLAQQQAALLMQQEERAKQAAVLMEQERQQEIAKMGTAVPRPPQDMGQLGVRTPLGPRVAAPVGPVVPTPTVLPMGAPVPRPRGPPPPPGDENREMDDPSVGPKIPQALEKILQLKESRQEEMNSQQEEEEMETDTRSSLGQSASETEEDTVSISKKEKNRKRRNRKKKKKPQRVRAASSESSGDREKDSGRSRGSDPPAADVEIEYVTEEPEIYEPNFIFFKRIFEAFKLTDDVKKEKEKEPEKLDKMESSAVPKKKGFEEEHKDSDDDSSDDEQEKKPEAPKLSKKKLRRMNRFTVAELKQLVARPDVVEMHDVTAQDPKLLVHLKATRNSVPVPRHWCFKRKYLQGKRGIEKPPFELPDFIKRTGIQEMREALQEKEEQKTMKSKMREKVRPKMGKIDIDYQKLHDAFFKWQTKPKLTIHGDLYYEGKEFETRLKEKKPGDLSDELRISLGMPVGPNAHKVPPPWLIAMQRYGPPPSYPNLKIPGLNSPIPESCSFGYHAGGWGKPPVDETGKPLYGDVFGTNAAEFQTKTEEEEIDRTPWGELEPSDEESSEEEEEEESDEDKPDETGFITPADSGLITPGGFSSVPAGMETPELIELRKKKIEEAMDGSETPQLFTVLPEKRTATVGGAMMGSTHIYDMSTVMSRKGPAPELQGVEVALAPEELELDPMAMTQKYEEHVREQQAQVEKEDFSDMVAEHAAKQKQKKRKAQPQDSRGGSKKYKEFKF</sequence>
<dbReference type="EMBL" id="AK019282">
    <property type="protein sequence ID" value="BAB31644.1"/>
    <property type="molecule type" value="mRNA"/>
</dbReference>
<dbReference type="EMBL" id="AK046493">
    <property type="protein sequence ID" value="BAC32755.1"/>
    <property type="molecule type" value="mRNA"/>
</dbReference>
<dbReference type="EMBL" id="AK142136">
    <property type="protein sequence ID" value="BAE24943.1"/>
    <property type="molecule type" value="mRNA"/>
</dbReference>
<dbReference type="EMBL" id="AK146063">
    <property type="protein sequence ID" value="BAE26872.1"/>
    <property type="molecule type" value="mRNA"/>
</dbReference>
<dbReference type="EMBL" id="AK146540">
    <property type="protein sequence ID" value="BAE27245.1"/>
    <property type="molecule type" value="mRNA"/>
</dbReference>
<dbReference type="EMBL" id="AK147687">
    <property type="protein sequence ID" value="BAE28075.1"/>
    <property type="molecule type" value="mRNA"/>
</dbReference>
<dbReference type="EMBL" id="AK150961">
    <property type="protein sequence ID" value="BAE29992.1"/>
    <property type="molecule type" value="mRNA"/>
</dbReference>
<dbReference type="EMBL" id="AK151354">
    <property type="protein sequence ID" value="BAE30330.1"/>
    <property type="molecule type" value="mRNA"/>
</dbReference>
<dbReference type="EMBL" id="AC125059">
    <property type="status" value="NOT_ANNOTATED_CDS"/>
    <property type="molecule type" value="Genomic_DNA"/>
</dbReference>
<dbReference type="EMBL" id="BC049118">
    <property type="protein sequence ID" value="AAH49118.1"/>
    <property type="molecule type" value="mRNA"/>
</dbReference>
<dbReference type="CCDS" id="CCDS29454.1"/>
<dbReference type="RefSeq" id="NP_084385.2">
    <property type="nucleotide sequence ID" value="NM_030109.2"/>
</dbReference>
<dbReference type="SMR" id="Q3UJB0"/>
<dbReference type="FunCoup" id="Q3UJB0">
    <property type="interactions" value="4555"/>
</dbReference>
<dbReference type="IntAct" id="Q3UJB0">
    <property type="interactions" value="1"/>
</dbReference>
<dbReference type="STRING" id="10090.ENSMUSP00000025774"/>
<dbReference type="ChEMBL" id="CHEMBL4879463"/>
<dbReference type="GlyGen" id="Q3UJB0">
    <property type="glycosylation" value="2 sites, 1 O-linked glycan (1 site)"/>
</dbReference>
<dbReference type="PhosphoSitePlus" id="Q3UJB0"/>
<dbReference type="jPOST" id="Q3UJB0"/>
<dbReference type="PaxDb" id="10090-ENSMUSP00000025774"/>
<dbReference type="ProteomicsDB" id="342981"/>
<dbReference type="Antibodypedia" id="30058">
    <property type="antibodies" value="225 antibodies from 27 providers"/>
</dbReference>
<dbReference type="DNASU" id="319322"/>
<dbReference type="Ensembl" id="ENSMUST00000025774.11">
    <property type="protein sequence ID" value="ENSMUSP00000025774.10"/>
    <property type="gene ID" value="ENSMUSG00000024853.11"/>
</dbReference>
<dbReference type="GeneID" id="319322"/>
<dbReference type="KEGG" id="mmu:319322"/>
<dbReference type="UCSC" id="uc008gcm.2">
    <property type="organism name" value="mouse"/>
</dbReference>
<dbReference type="AGR" id="MGI:2441856"/>
<dbReference type="CTD" id="10992"/>
<dbReference type="MGI" id="MGI:2441856">
    <property type="gene designation" value="Sf3b2"/>
</dbReference>
<dbReference type="VEuPathDB" id="HostDB:ENSMUSG00000024853"/>
<dbReference type="eggNOG" id="KOG2330">
    <property type="taxonomic scope" value="Eukaryota"/>
</dbReference>
<dbReference type="GeneTree" id="ENSGT00390000006734"/>
<dbReference type="HOGENOM" id="CLU_014435_0_2_1"/>
<dbReference type="OMA" id="KGEPIGQ"/>
<dbReference type="OrthoDB" id="10260794at2759"/>
<dbReference type="TreeFam" id="TF300635"/>
<dbReference type="Reactome" id="R-MMU-72163">
    <property type="pathway name" value="mRNA Splicing - Major Pathway"/>
</dbReference>
<dbReference type="Reactome" id="R-MMU-72165">
    <property type="pathway name" value="mRNA Splicing - Minor Pathway"/>
</dbReference>
<dbReference type="BioGRID-ORCS" id="319322">
    <property type="hits" value="23 hits in 75 CRISPR screens"/>
</dbReference>
<dbReference type="ChiTaRS" id="Sf3b2">
    <property type="organism name" value="mouse"/>
</dbReference>
<dbReference type="PRO" id="PR:Q3UJB0"/>
<dbReference type="Proteomes" id="UP000000589">
    <property type="component" value="Chromosome 19"/>
</dbReference>
<dbReference type="RNAct" id="Q3UJB0">
    <property type="molecule type" value="protein"/>
</dbReference>
<dbReference type="Bgee" id="ENSMUSG00000024853">
    <property type="expression patterns" value="Expressed in rostral migratory stream and 256 other cell types or tissues"/>
</dbReference>
<dbReference type="ExpressionAtlas" id="Q3UJB0">
    <property type="expression patterns" value="baseline and differential"/>
</dbReference>
<dbReference type="GO" id="GO:0071013">
    <property type="term" value="C:catalytic step 2 spliceosome"/>
    <property type="evidence" value="ECO:0007669"/>
    <property type="project" value="Ensembl"/>
</dbReference>
<dbReference type="GO" id="GO:0016607">
    <property type="term" value="C:nuclear speck"/>
    <property type="evidence" value="ECO:0007669"/>
    <property type="project" value="UniProtKB-SubCell"/>
</dbReference>
<dbReference type="GO" id="GO:0005634">
    <property type="term" value="C:nucleus"/>
    <property type="evidence" value="ECO:0000250"/>
    <property type="project" value="UniProtKB"/>
</dbReference>
<dbReference type="GO" id="GO:0005681">
    <property type="term" value="C:spliceosomal complex"/>
    <property type="evidence" value="ECO:0000250"/>
    <property type="project" value="UniProtKB"/>
</dbReference>
<dbReference type="GO" id="GO:0005689">
    <property type="term" value="C:U12-type spliceosomal complex"/>
    <property type="evidence" value="ECO:0007669"/>
    <property type="project" value="Ensembl"/>
</dbReference>
<dbReference type="GO" id="GO:0071005">
    <property type="term" value="C:U2-type precatalytic spliceosome"/>
    <property type="evidence" value="ECO:0007669"/>
    <property type="project" value="Ensembl"/>
</dbReference>
<dbReference type="GO" id="GO:0005684">
    <property type="term" value="C:U2-type spliceosomal complex"/>
    <property type="evidence" value="ECO:0000250"/>
    <property type="project" value="UniProtKB"/>
</dbReference>
<dbReference type="GO" id="GO:0000398">
    <property type="term" value="P:mRNA splicing, via spliceosome"/>
    <property type="evidence" value="ECO:0000250"/>
    <property type="project" value="UniProtKB"/>
</dbReference>
<dbReference type="InterPro" id="IPR007180">
    <property type="entry name" value="DUF382"/>
</dbReference>
<dbReference type="InterPro" id="IPR006568">
    <property type="entry name" value="PSP_pro-rich"/>
</dbReference>
<dbReference type="InterPro" id="IPR003034">
    <property type="entry name" value="SAP_dom"/>
</dbReference>
<dbReference type="InterPro" id="IPR052584">
    <property type="entry name" value="U2_snRNP_Complex_Component"/>
</dbReference>
<dbReference type="PANTHER" id="PTHR12785">
    <property type="entry name" value="SPLICING FACTOR 3B"/>
    <property type="match status" value="1"/>
</dbReference>
<dbReference type="PANTHER" id="PTHR12785:SF6">
    <property type="entry name" value="SPLICING FACTOR 3B SUBUNIT 2"/>
    <property type="match status" value="1"/>
</dbReference>
<dbReference type="Pfam" id="PF04037">
    <property type="entry name" value="DUF382"/>
    <property type="match status" value="1"/>
</dbReference>
<dbReference type="Pfam" id="PF04046">
    <property type="entry name" value="PSP"/>
    <property type="match status" value="1"/>
</dbReference>
<dbReference type="Pfam" id="PF02037">
    <property type="entry name" value="SAP"/>
    <property type="match status" value="1"/>
</dbReference>
<dbReference type="SMART" id="SM00581">
    <property type="entry name" value="PSP"/>
    <property type="match status" value="1"/>
</dbReference>
<dbReference type="SMART" id="SM00513">
    <property type="entry name" value="SAP"/>
    <property type="match status" value="1"/>
</dbReference>
<dbReference type="PROSITE" id="PS50800">
    <property type="entry name" value="SAP"/>
    <property type="match status" value="1"/>
</dbReference>
<comment type="function">
    <text evidence="1">Component of the 17S U2 SnRNP complex of the spliceosome, a large ribonucleoprotein complex that removes introns from transcribed pre-mRNAs. The 17S U2 SnRNP complex (1) directly participates in early spliceosome assembly and (2) mediates recognition of the intron branch site during pre-mRNA splicing by promoting the selection of the pre-mRNA branch-site adenosine, the nucleophile for the first step of splicing. Within the 17S U2 SnRNP complex, SF3B2 is part of the SF3B subcomplex, which is required for 'A' complex assembly formed by the stable binding of U2 snRNP to the branchpoint sequence in pre-mRNA. Sequence independent binding of SF3A and SF3B subcomplexes upstream of the branch site is essential, it may anchor U2 snRNP to the pre-mRNA. May also be involved in the assembly of the 'E' complex. Also acts as a component of the minor spliceosome, which is involved in the splicing of U12-type introns in pre-mRNAs.</text>
</comment>
<comment type="subunit">
    <text evidence="1">Component of the 17S U2 SnRNP complex, a ribonucleoprotein complex that contains small nuclear RNA (snRNA) U2 and a number of specific proteins. Part of the SF3B subcomplex of the 17S U2 SnRNP complex. SF3B associates with the splicing subcomplex SF3A and a 12S RNA unit to form the U2 small nuclear ribonucleoproteins complex (U2 snRNP). Within the SF3B complex, interacts directly with SF3B4. Found in a complex with PRMT9, SF3B2 and SF3B4. Interacts (Arg-491-methylated form) with SMN1 (via Tudor domain). Interacts with RBM7. Interacts with ERCC6. Component of the minor spliceosome. Within this complex, interacts with SCNM1 and CRIPT.</text>
</comment>
<comment type="subcellular location">
    <subcellularLocation>
        <location evidence="1">Nucleus</location>
    </subcellularLocation>
    <subcellularLocation>
        <location evidence="1">Nucleus speckle</location>
    </subcellularLocation>
</comment>
<comment type="PTM">
    <text evidence="1">Methylation at Arg-491 by PRMT9 is required for the interaction with SMN1.</text>
</comment>
<reference key="1">
    <citation type="journal article" date="2005" name="Science">
        <title>The transcriptional landscape of the mammalian genome.</title>
        <authorList>
            <person name="Carninci P."/>
            <person name="Kasukawa T."/>
            <person name="Katayama S."/>
            <person name="Gough J."/>
            <person name="Frith M.C."/>
            <person name="Maeda N."/>
            <person name="Oyama R."/>
            <person name="Ravasi T."/>
            <person name="Lenhard B."/>
            <person name="Wells C."/>
            <person name="Kodzius R."/>
            <person name="Shimokawa K."/>
            <person name="Bajic V.B."/>
            <person name="Brenner S.E."/>
            <person name="Batalov S."/>
            <person name="Forrest A.R."/>
            <person name="Zavolan M."/>
            <person name="Davis M.J."/>
            <person name="Wilming L.G."/>
            <person name="Aidinis V."/>
            <person name="Allen J.E."/>
            <person name="Ambesi-Impiombato A."/>
            <person name="Apweiler R."/>
            <person name="Aturaliya R.N."/>
            <person name="Bailey T.L."/>
            <person name="Bansal M."/>
            <person name="Baxter L."/>
            <person name="Beisel K.W."/>
            <person name="Bersano T."/>
            <person name="Bono H."/>
            <person name="Chalk A.M."/>
            <person name="Chiu K.P."/>
            <person name="Choudhary V."/>
            <person name="Christoffels A."/>
            <person name="Clutterbuck D.R."/>
            <person name="Crowe M.L."/>
            <person name="Dalla E."/>
            <person name="Dalrymple B.P."/>
            <person name="de Bono B."/>
            <person name="Della Gatta G."/>
            <person name="di Bernardo D."/>
            <person name="Down T."/>
            <person name="Engstrom P."/>
            <person name="Fagiolini M."/>
            <person name="Faulkner G."/>
            <person name="Fletcher C.F."/>
            <person name="Fukushima T."/>
            <person name="Furuno M."/>
            <person name="Futaki S."/>
            <person name="Gariboldi M."/>
            <person name="Georgii-Hemming P."/>
            <person name="Gingeras T.R."/>
            <person name="Gojobori T."/>
            <person name="Green R.E."/>
            <person name="Gustincich S."/>
            <person name="Harbers M."/>
            <person name="Hayashi Y."/>
            <person name="Hensch T.K."/>
            <person name="Hirokawa N."/>
            <person name="Hill D."/>
            <person name="Huminiecki L."/>
            <person name="Iacono M."/>
            <person name="Ikeo K."/>
            <person name="Iwama A."/>
            <person name="Ishikawa T."/>
            <person name="Jakt M."/>
            <person name="Kanapin A."/>
            <person name="Katoh M."/>
            <person name="Kawasawa Y."/>
            <person name="Kelso J."/>
            <person name="Kitamura H."/>
            <person name="Kitano H."/>
            <person name="Kollias G."/>
            <person name="Krishnan S.P."/>
            <person name="Kruger A."/>
            <person name="Kummerfeld S.K."/>
            <person name="Kurochkin I.V."/>
            <person name="Lareau L.F."/>
            <person name="Lazarevic D."/>
            <person name="Lipovich L."/>
            <person name="Liu J."/>
            <person name="Liuni S."/>
            <person name="McWilliam S."/>
            <person name="Madan Babu M."/>
            <person name="Madera M."/>
            <person name="Marchionni L."/>
            <person name="Matsuda H."/>
            <person name="Matsuzawa S."/>
            <person name="Miki H."/>
            <person name="Mignone F."/>
            <person name="Miyake S."/>
            <person name="Morris K."/>
            <person name="Mottagui-Tabar S."/>
            <person name="Mulder N."/>
            <person name="Nakano N."/>
            <person name="Nakauchi H."/>
            <person name="Ng P."/>
            <person name="Nilsson R."/>
            <person name="Nishiguchi S."/>
            <person name="Nishikawa S."/>
            <person name="Nori F."/>
            <person name="Ohara O."/>
            <person name="Okazaki Y."/>
            <person name="Orlando V."/>
            <person name="Pang K.C."/>
            <person name="Pavan W.J."/>
            <person name="Pavesi G."/>
            <person name="Pesole G."/>
            <person name="Petrovsky N."/>
            <person name="Piazza S."/>
            <person name="Reed J."/>
            <person name="Reid J.F."/>
            <person name="Ring B.Z."/>
            <person name="Ringwald M."/>
            <person name="Rost B."/>
            <person name="Ruan Y."/>
            <person name="Salzberg S.L."/>
            <person name="Sandelin A."/>
            <person name="Schneider C."/>
            <person name="Schoenbach C."/>
            <person name="Sekiguchi K."/>
            <person name="Semple C.A."/>
            <person name="Seno S."/>
            <person name="Sessa L."/>
            <person name="Sheng Y."/>
            <person name="Shibata Y."/>
            <person name="Shimada H."/>
            <person name="Shimada K."/>
            <person name="Silva D."/>
            <person name="Sinclair B."/>
            <person name="Sperling S."/>
            <person name="Stupka E."/>
            <person name="Sugiura K."/>
            <person name="Sultana R."/>
            <person name="Takenaka Y."/>
            <person name="Taki K."/>
            <person name="Tammoja K."/>
            <person name="Tan S.L."/>
            <person name="Tang S."/>
            <person name="Taylor M.S."/>
            <person name="Tegner J."/>
            <person name="Teichmann S.A."/>
            <person name="Ueda H.R."/>
            <person name="van Nimwegen E."/>
            <person name="Verardo R."/>
            <person name="Wei C.L."/>
            <person name="Yagi K."/>
            <person name="Yamanishi H."/>
            <person name="Zabarovsky E."/>
            <person name="Zhu S."/>
            <person name="Zimmer A."/>
            <person name="Hide W."/>
            <person name="Bult C."/>
            <person name="Grimmond S.M."/>
            <person name="Teasdale R.D."/>
            <person name="Liu E.T."/>
            <person name="Brusic V."/>
            <person name="Quackenbush J."/>
            <person name="Wahlestedt C."/>
            <person name="Mattick J.S."/>
            <person name="Hume D.A."/>
            <person name="Kai C."/>
            <person name="Sasaki D."/>
            <person name="Tomaru Y."/>
            <person name="Fukuda S."/>
            <person name="Kanamori-Katayama M."/>
            <person name="Suzuki M."/>
            <person name="Aoki J."/>
            <person name="Arakawa T."/>
            <person name="Iida J."/>
            <person name="Imamura K."/>
            <person name="Itoh M."/>
            <person name="Kato T."/>
            <person name="Kawaji H."/>
            <person name="Kawagashira N."/>
            <person name="Kawashima T."/>
            <person name="Kojima M."/>
            <person name="Kondo S."/>
            <person name="Konno H."/>
            <person name="Nakano K."/>
            <person name="Ninomiya N."/>
            <person name="Nishio T."/>
            <person name="Okada M."/>
            <person name="Plessy C."/>
            <person name="Shibata K."/>
            <person name="Shiraki T."/>
            <person name="Suzuki S."/>
            <person name="Tagami M."/>
            <person name="Waki K."/>
            <person name="Watahiki A."/>
            <person name="Okamura-Oho Y."/>
            <person name="Suzuki H."/>
            <person name="Kawai J."/>
            <person name="Hayashizaki Y."/>
        </authorList>
    </citation>
    <scope>NUCLEOTIDE SEQUENCE [LARGE SCALE MRNA]</scope>
    <source>
        <strain>C57BL/6J</strain>
        <tissue>Amnion</tissue>
        <tissue>Bone marrow</tissue>
        <tissue>Corpora quadrigemina</tissue>
        <tissue>Eye</tissue>
        <tissue>Placenta</tissue>
    </source>
</reference>
<reference key="2">
    <citation type="journal article" date="2009" name="PLoS Biol.">
        <title>Lineage-specific biology revealed by a finished genome assembly of the mouse.</title>
        <authorList>
            <person name="Church D.M."/>
            <person name="Goodstadt L."/>
            <person name="Hillier L.W."/>
            <person name="Zody M.C."/>
            <person name="Goldstein S."/>
            <person name="She X."/>
            <person name="Bult C.J."/>
            <person name="Agarwala R."/>
            <person name="Cherry J.L."/>
            <person name="DiCuccio M."/>
            <person name="Hlavina W."/>
            <person name="Kapustin Y."/>
            <person name="Meric P."/>
            <person name="Maglott D."/>
            <person name="Birtle Z."/>
            <person name="Marques A.C."/>
            <person name="Graves T."/>
            <person name="Zhou S."/>
            <person name="Teague B."/>
            <person name="Potamousis K."/>
            <person name="Churas C."/>
            <person name="Place M."/>
            <person name="Herschleb J."/>
            <person name="Runnheim R."/>
            <person name="Forrest D."/>
            <person name="Amos-Landgraf J."/>
            <person name="Schwartz D.C."/>
            <person name="Cheng Z."/>
            <person name="Lindblad-Toh K."/>
            <person name="Eichler E.E."/>
            <person name="Ponting C.P."/>
        </authorList>
    </citation>
    <scope>NUCLEOTIDE SEQUENCE [LARGE SCALE GENOMIC DNA]</scope>
    <source>
        <strain>C57BL/6J</strain>
    </source>
</reference>
<reference key="3">
    <citation type="journal article" date="2004" name="Genome Res.">
        <title>The status, quality, and expansion of the NIH full-length cDNA project: the Mammalian Gene Collection (MGC).</title>
        <authorList>
            <consortium name="The MGC Project Team"/>
        </authorList>
    </citation>
    <scope>NUCLEOTIDE SEQUENCE [LARGE SCALE MRNA]</scope>
    <source>
        <strain>C57BL/6J</strain>
        <tissue>Brain</tissue>
    </source>
</reference>
<name>SF3B2_MOUSE</name>
<gene>
    <name evidence="6" type="primary">Sf3b2</name>
</gene>
<keyword id="KW-0007">Acetylation</keyword>
<keyword id="KW-0175">Coiled coil</keyword>
<keyword id="KW-1017">Isopeptide bond</keyword>
<keyword id="KW-0488">Methylation</keyword>
<keyword id="KW-0507">mRNA processing</keyword>
<keyword id="KW-0508">mRNA splicing</keyword>
<keyword id="KW-0539">Nucleus</keyword>
<keyword id="KW-0597">Phosphoprotein</keyword>
<keyword id="KW-1185">Reference proteome</keyword>
<keyword id="KW-0747">Spliceosome</keyword>
<keyword id="KW-0832">Ubl conjugation</keyword>
<organism>
    <name type="scientific">Mus musculus</name>
    <name type="common">Mouse</name>
    <dbReference type="NCBI Taxonomy" id="10090"/>
    <lineage>
        <taxon>Eukaryota</taxon>
        <taxon>Metazoa</taxon>
        <taxon>Chordata</taxon>
        <taxon>Craniata</taxon>
        <taxon>Vertebrata</taxon>
        <taxon>Euteleostomi</taxon>
        <taxon>Mammalia</taxon>
        <taxon>Eutheria</taxon>
        <taxon>Euarchontoglires</taxon>
        <taxon>Glires</taxon>
        <taxon>Rodentia</taxon>
        <taxon>Myomorpha</taxon>
        <taxon>Muroidea</taxon>
        <taxon>Muridae</taxon>
        <taxon>Murinae</taxon>
        <taxon>Mus</taxon>
        <taxon>Mus</taxon>
    </lineage>
</organism>
<proteinExistence type="evidence at transcript level"/>
<evidence type="ECO:0000250" key="1">
    <source>
        <dbReference type="UniProtKB" id="Q13435"/>
    </source>
</evidence>
<evidence type="ECO:0000255" key="2"/>
<evidence type="ECO:0000255" key="3">
    <source>
        <dbReference type="PROSITE-ProRule" id="PRU00186"/>
    </source>
</evidence>
<evidence type="ECO:0000256" key="4">
    <source>
        <dbReference type="SAM" id="MobiDB-lite"/>
    </source>
</evidence>
<evidence type="ECO:0000305" key="5"/>
<evidence type="ECO:0000312" key="6">
    <source>
        <dbReference type="MGI" id="MGI:2441856"/>
    </source>
</evidence>
<feature type="chain" id="PRO_0000459398" description="Splicing factor 3B subunit 2">
    <location>
        <begin position="1"/>
        <end position="878"/>
    </location>
</feature>
<feature type="domain" description="SAP" evidence="3">
    <location>
        <begin position="24"/>
        <end position="58"/>
    </location>
</feature>
<feature type="region of interest" description="Disordered" evidence="4">
    <location>
        <begin position="1"/>
        <end position="25"/>
    </location>
</feature>
<feature type="region of interest" description="Disordered" evidence="4">
    <location>
        <begin position="67"/>
        <end position="136"/>
    </location>
</feature>
<feature type="region of interest" description="Disordered" evidence="4">
    <location>
        <begin position="183"/>
        <end position="356"/>
    </location>
</feature>
<feature type="region of interest" description="Disordered" evidence="4">
    <location>
        <begin position="383"/>
        <end position="436"/>
    </location>
</feature>
<feature type="region of interest" description="Required for interaction with PRMT9" evidence="1">
    <location>
        <begin position="384"/>
        <end position="533"/>
    </location>
</feature>
<feature type="region of interest" description="Disordered" evidence="4">
    <location>
        <begin position="674"/>
        <end position="740"/>
    </location>
</feature>
<feature type="region of interest" description="Disordered" evidence="4">
    <location>
        <begin position="827"/>
        <end position="878"/>
    </location>
</feature>
<feature type="coiled-coil region" evidence="2">
    <location>
        <begin position="140"/>
        <end position="177"/>
    </location>
</feature>
<feature type="compositionally biased region" description="Basic and acidic residues" evidence="4">
    <location>
        <begin position="1"/>
        <end position="10"/>
    </location>
</feature>
<feature type="compositionally biased region" description="Pro residues" evidence="4">
    <location>
        <begin position="91"/>
        <end position="114"/>
    </location>
</feature>
<feature type="compositionally biased region" description="Pro residues" evidence="4">
    <location>
        <begin position="122"/>
        <end position="133"/>
    </location>
</feature>
<feature type="compositionally biased region" description="Low complexity" evidence="4">
    <location>
        <begin position="201"/>
        <end position="221"/>
    </location>
</feature>
<feature type="compositionally biased region" description="Pro residues" evidence="4">
    <location>
        <begin position="224"/>
        <end position="237"/>
    </location>
</feature>
<feature type="compositionally biased region" description="Basic and acidic residues" evidence="4">
    <location>
        <begin position="260"/>
        <end position="269"/>
    </location>
</feature>
<feature type="compositionally biased region" description="Basic residues" evidence="4">
    <location>
        <begin position="305"/>
        <end position="321"/>
    </location>
</feature>
<feature type="compositionally biased region" description="Basic and acidic residues" evidence="4">
    <location>
        <begin position="330"/>
        <end position="342"/>
    </location>
</feature>
<feature type="compositionally biased region" description="Basic and acidic residues" evidence="4">
    <location>
        <begin position="383"/>
        <end position="397"/>
    </location>
</feature>
<feature type="compositionally biased region" description="Basic and acidic residues" evidence="4">
    <location>
        <begin position="405"/>
        <end position="414"/>
    </location>
</feature>
<feature type="compositionally biased region" description="Acidic residues" evidence="4">
    <location>
        <begin position="695"/>
        <end position="715"/>
    </location>
</feature>
<feature type="compositionally biased region" description="Basic and acidic residues" evidence="4">
    <location>
        <begin position="827"/>
        <end position="852"/>
    </location>
</feature>
<feature type="modified residue" description="Omega-N-methylarginine" evidence="1">
    <location>
        <position position="205"/>
    </location>
</feature>
<feature type="modified residue" description="Omega-N-methylarginine" evidence="1">
    <location>
        <position position="228"/>
    </location>
</feature>
<feature type="modified residue" description="Omega-N-methylarginine" evidence="1">
    <location>
        <position position="230"/>
    </location>
</feature>
<feature type="modified residue" description="N6-acetyllysine" evidence="1">
    <location>
        <position position="258"/>
    </location>
</feature>
<feature type="modified residue" description="Phosphoserine" evidence="1">
    <location>
        <position position="272"/>
    </location>
</feature>
<feature type="modified residue" description="Phosphothreonine" evidence="1">
    <location>
        <position position="281"/>
    </location>
</feature>
<feature type="modified residue" description="Phosphoserine" evidence="1">
    <location>
        <position position="290"/>
    </location>
</feature>
<feature type="modified residue" description="Phosphoserine" evidence="1">
    <location>
        <position position="292"/>
    </location>
</feature>
<feature type="modified residue" description="Phosphothreonine" evidence="1">
    <location>
        <position position="294"/>
    </location>
</feature>
<feature type="modified residue" description="Phosphoserine" evidence="1">
    <location>
        <position position="300"/>
    </location>
</feature>
<feature type="modified residue" description="Phosphoserine" evidence="1">
    <location>
        <position position="343"/>
    </location>
</feature>
<feature type="modified residue" description="Phosphoserine" evidence="1">
    <location>
        <position position="414"/>
    </location>
</feature>
<feature type="modified residue" description="Phosphoserine" evidence="1">
    <location>
        <position position="418"/>
    </location>
</feature>
<feature type="modified residue" description="Phosphoserine" evidence="1">
    <location>
        <position position="419"/>
    </location>
</feature>
<feature type="modified residue" description="Omega-N-methylarginine" evidence="1">
    <location>
        <position position="491"/>
    </location>
</feature>
<feature type="modified residue" description="Symmetric dimethylarginine" evidence="1">
    <location>
        <position position="491"/>
    </location>
</feature>
<feature type="modified residue" description="Omega-N-methylarginine" evidence="1">
    <location>
        <position position="498"/>
    </location>
</feature>
<feature type="modified residue" description="Phosphothreonine" evidence="1">
    <location>
        <position position="763"/>
    </location>
</feature>
<feature type="modified residue" description="Phosphoserine" evidence="1">
    <location>
        <position position="844"/>
    </location>
</feature>
<feature type="cross-link" description="Glycyl lysine isopeptide (Lys-Gly) (interchain with G-Cter in SUMO2)" evidence="1">
    <location>
        <position position="10"/>
    </location>
</feature>
<feature type="cross-link" description="Glycyl lysine isopeptide (Lys-Gly) (interchain with G-Cter in SUMO2)" evidence="1">
    <location>
        <position position="263"/>
    </location>
</feature>
<feature type="cross-link" description="Glycyl lysine isopeptide (Lys-Gly) (interchain with G-Cter in SUMO2)" evidence="1">
    <location>
        <position position="383"/>
    </location>
</feature>
<feature type="cross-link" description="Glycyl lysine isopeptide (Lys-Gly) (interchain with G-Cter in SUMO2)" evidence="1">
    <location>
        <position position="395"/>
    </location>
</feature>
<feature type="cross-link" description="Glycyl lysine isopeptide (Lys-Gly) (interchain with G-Cter in SUMO2)" evidence="1">
    <location>
        <position position="475"/>
    </location>
</feature>
<feature type="cross-link" description="Glycyl lysine isopeptide (Lys-Gly) (interchain with G-Cter in SUMO2)" evidence="1">
    <location>
        <position position="526"/>
    </location>
</feature>
<feature type="cross-link" description="Glycyl lysine isopeptide (Lys-Gly) (interchain with G-Cter in SUMO2)" evidence="1">
    <location>
        <position position="753"/>
    </location>
</feature>
<feature type="cross-link" description="Glycyl lysine isopeptide (Lys-Gly) (interchain with G-Cter in SUMO2)" evidence="1">
    <location>
        <position position="773"/>
    </location>
</feature>
<feature type="cross-link" description="Glycyl lysine isopeptide (Lys-Gly) (interchain with G-Cter in SUMO2)" evidence="1">
    <location>
        <position position="826"/>
    </location>
</feature>
<feature type="cross-link" description="Glycyl lysine isopeptide (Lys-Gly) (interchain with G-Cter in SUMO2)" evidence="1">
    <location>
        <position position="840"/>
    </location>
</feature>
<feature type="sequence conflict" description="In Ref. 1; BAB31644." evidence="5" ref="1">
    <location>
        <position position="206"/>
    </location>
</feature>
<feature type="sequence conflict" description="In Ref. 1; BAE29992." evidence="5" ref="1">
    <original>R</original>
    <variation>W</variation>
    <location>
        <position position="454"/>
    </location>
</feature>
<feature type="sequence conflict" description="In Ref. 1; BAC32755." evidence="5" ref="1">
    <original>P</original>
    <variation>H</variation>
    <location>
        <position position="455"/>
    </location>
</feature>
<feature type="sequence conflict" description="In Ref. 1; BAE30330." evidence="5" ref="1">
    <original>H</original>
    <variation>Q</variation>
    <location>
        <position position="486"/>
    </location>
</feature>
<feature type="sequence conflict" description="In Ref. 1; BAE24943." evidence="5" ref="1">
    <original>N</original>
    <variation>S</variation>
    <location>
        <position position="630"/>
    </location>
</feature>
<feature type="sequence conflict" description="In Ref. 3; AAH49118." evidence="5" ref="3">
    <original>K</original>
    <variation>N</variation>
    <location>
        <position position="773"/>
    </location>
</feature>
<feature type="sequence conflict" description="In Ref. 1; BAE29992." evidence="5" ref="1">
    <original>K</original>
    <variation>R</variation>
    <location>
        <position position="877"/>
    </location>
</feature>
<accession>Q3UJB0</accession>
<accession>A0A494B9S9</accession>
<accession>Q3UAI4</accession>
<accession>Q3UBH2</accession>
<accession>Q3UQU5</accession>
<accession>Q80W39</accession>
<accession>Q8BL33</accession>
<accession>Q9CS24</accession>